<organism>
    <name type="scientific">Oryza sativa subsp. japonica</name>
    <name type="common">Rice</name>
    <dbReference type="NCBI Taxonomy" id="39947"/>
    <lineage>
        <taxon>Eukaryota</taxon>
        <taxon>Viridiplantae</taxon>
        <taxon>Streptophyta</taxon>
        <taxon>Embryophyta</taxon>
        <taxon>Tracheophyta</taxon>
        <taxon>Spermatophyta</taxon>
        <taxon>Magnoliopsida</taxon>
        <taxon>Liliopsida</taxon>
        <taxon>Poales</taxon>
        <taxon>Poaceae</taxon>
        <taxon>BOP clade</taxon>
        <taxon>Oryzoideae</taxon>
        <taxon>Oryzeae</taxon>
        <taxon>Oryzinae</taxon>
        <taxon>Oryza</taxon>
        <taxon>Oryza sativa</taxon>
    </lineage>
</organism>
<gene>
    <name type="primary">CML7</name>
    <name type="ordered locus">Os08g0117400</name>
    <name type="ordered locus">LOC_Os08g02420</name>
    <name type="ORF">OsJ_024805</name>
    <name type="ORF">P0470F10.20</name>
</gene>
<accession>Q84VG0</accession>
<accession>B7E498</accession>
<name>CML7_ORYSJ</name>
<proteinExistence type="evidence at transcript level"/>
<protein>
    <recommendedName>
        <fullName>Probable calcium-binding protein CML7</fullName>
    </recommendedName>
    <alternativeName>
        <fullName>Calmodulin-like protein 7</fullName>
    </alternativeName>
</protein>
<dbReference type="EMBL" id="AY224521">
    <property type="protein sequence ID" value="AAO72641.1"/>
    <property type="molecule type" value="mRNA"/>
</dbReference>
<dbReference type="EMBL" id="AP004562">
    <property type="protein sequence ID" value="BAD33100.1"/>
    <property type="molecule type" value="Genomic_DNA"/>
</dbReference>
<dbReference type="EMBL" id="AP008214">
    <property type="protein sequence ID" value="BAF22776.1"/>
    <property type="molecule type" value="Genomic_DNA"/>
</dbReference>
<dbReference type="EMBL" id="AP014964">
    <property type="protein sequence ID" value="BAT03565.1"/>
    <property type="molecule type" value="Genomic_DNA"/>
</dbReference>
<dbReference type="EMBL" id="CM000145">
    <property type="protein sequence ID" value="EAZ41322.1"/>
    <property type="molecule type" value="Genomic_DNA"/>
</dbReference>
<dbReference type="EMBL" id="AK059891">
    <property type="protein sequence ID" value="BAG87195.1"/>
    <property type="molecule type" value="mRNA"/>
</dbReference>
<dbReference type="EMBL" id="AK103863">
    <property type="protein sequence ID" value="BAG96295.1"/>
    <property type="molecule type" value="mRNA"/>
</dbReference>
<dbReference type="RefSeq" id="XP_015649878.1">
    <property type="nucleotide sequence ID" value="XM_015794392.1"/>
</dbReference>
<dbReference type="SMR" id="Q84VG0"/>
<dbReference type="BioGRID" id="813562">
    <property type="interactions" value="1"/>
</dbReference>
<dbReference type="FunCoup" id="Q84VG0">
    <property type="interactions" value="527"/>
</dbReference>
<dbReference type="STRING" id="39947.Q84VG0"/>
<dbReference type="PaxDb" id="39947-Q84VG0"/>
<dbReference type="EnsemblPlants" id="Os08t0117400-01">
    <property type="protein sequence ID" value="Os08t0117400-01"/>
    <property type="gene ID" value="Os08g0117400"/>
</dbReference>
<dbReference type="EnsemblPlants" id="Os08t0117400-02">
    <property type="protein sequence ID" value="Os08t0117400-02"/>
    <property type="gene ID" value="Os08g0117400"/>
</dbReference>
<dbReference type="Gramene" id="Os08t0117400-01">
    <property type="protein sequence ID" value="Os08t0117400-01"/>
    <property type="gene ID" value="Os08g0117400"/>
</dbReference>
<dbReference type="Gramene" id="Os08t0117400-02">
    <property type="protein sequence ID" value="Os08t0117400-02"/>
    <property type="gene ID" value="Os08g0117400"/>
</dbReference>
<dbReference type="KEGG" id="dosa:Os08g0117400"/>
<dbReference type="eggNOG" id="KOG0027">
    <property type="taxonomic scope" value="Eukaryota"/>
</dbReference>
<dbReference type="HOGENOM" id="CLU_061288_2_0_1"/>
<dbReference type="InParanoid" id="Q84VG0"/>
<dbReference type="OMA" id="WIREVDA"/>
<dbReference type="OrthoDB" id="26525at2759"/>
<dbReference type="Proteomes" id="UP000000763">
    <property type="component" value="Chromosome 8"/>
</dbReference>
<dbReference type="Proteomes" id="UP000007752">
    <property type="component" value="Chromosome 8"/>
</dbReference>
<dbReference type="Proteomes" id="UP000059680">
    <property type="component" value="Chromosome 8"/>
</dbReference>
<dbReference type="GO" id="GO:0005737">
    <property type="term" value="C:cytoplasm"/>
    <property type="evidence" value="ECO:0000318"/>
    <property type="project" value="GO_Central"/>
</dbReference>
<dbReference type="GO" id="GO:0005509">
    <property type="term" value="F:calcium ion binding"/>
    <property type="evidence" value="ECO:0000318"/>
    <property type="project" value="GO_Central"/>
</dbReference>
<dbReference type="GO" id="GO:0030234">
    <property type="term" value="F:enzyme regulator activity"/>
    <property type="evidence" value="ECO:0000318"/>
    <property type="project" value="GO_Central"/>
</dbReference>
<dbReference type="CDD" id="cd00051">
    <property type="entry name" value="EFh"/>
    <property type="match status" value="1"/>
</dbReference>
<dbReference type="FunFam" id="1.10.238.10:FF:000082">
    <property type="entry name" value="Myosin light chain 1"/>
    <property type="match status" value="1"/>
</dbReference>
<dbReference type="FunFam" id="1.10.238.10:FF:000143">
    <property type="entry name" value="probable calcium-binding protein CML13"/>
    <property type="match status" value="1"/>
</dbReference>
<dbReference type="Gene3D" id="1.10.238.10">
    <property type="entry name" value="EF-hand"/>
    <property type="match status" value="2"/>
</dbReference>
<dbReference type="InterPro" id="IPR050230">
    <property type="entry name" value="CALM/Myosin/TropC-like"/>
</dbReference>
<dbReference type="InterPro" id="IPR011992">
    <property type="entry name" value="EF-hand-dom_pair"/>
</dbReference>
<dbReference type="InterPro" id="IPR018247">
    <property type="entry name" value="EF_Hand_1_Ca_BS"/>
</dbReference>
<dbReference type="InterPro" id="IPR002048">
    <property type="entry name" value="EF_hand_dom"/>
</dbReference>
<dbReference type="PANTHER" id="PTHR23048:SF0">
    <property type="entry name" value="CALMODULIN LIKE 3"/>
    <property type="match status" value="1"/>
</dbReference>
<dbReference type="PANTHER" id="PTHR23048">
    <property type="entry name" value="MYOSIN LIGHT CHAIN 1, 3"/>
    <property type="match status" value="1"/>
</dbReference>
<dbReference type="Pfam" id="PF13405">
    <property type="entry name" value="EF-hand_6"/>
    <property type="match status" value="1"/>
</dbReference>
<dbReference type="Pfam" id="PF13499">
    <property type="entry name" value="EF-hand_7"/>
    <property type="match status" value="1"/>
</dbReference>
<dbReference type="SMART" id="SM00054">
    <property type="entry name" value="EFh"/>
    <property type="match status" value="3"/>
</dbReference>
<dbReference type="SUPFAM" id="SSF47473">
    <property type="entry name" value="EF-hand"/>
    <property type="match status" value="1"/>
</dbReference>
<dbReference type="PROSITE" id="PS00018">
    <property type="entry name" value="EF_HAND_1"/>
    <property type="match status" value="2"/>
</dbReference>
<dbReference type="PROSITE" id="PS50222">
    <property type="entry name" value="EF_HAND_2"/>
    <property type="match status" value="3"/>
</dbReference>
<comment type="function">
    <text evidence="1">Potential calcium sensor.</text>
</comment>
<comment type="caution">
    <text evidence="3">Although assigned as a calmodulin family member by PubMed:17263873, it only contains EF-hand domains.</text>
</comment>
<keyword id="KW-0106">Calcium</keyword>
<keyword id="KW-0479">Metal-binding</keyword>
<keyword id="KW-1185">Reference proteome</keyword>
<keyword id="KW-0677">Repeat</keyword>
<evidence type="ECO:0000250" key="1"/>
<evidence type="ECO:0000255" key="2">
    <source>
        <dbReference type="PROSITE-ProRule" id="PRU00448"/>
    </source>
</evidence>
<evidence type="ECO:0000305" key="3"/>
<feature type="chain" id="PRO_0000338422" description="Probable calcium-binding protein CML7">
    <location>
        <begin position="1"/>
        <end position="148"/>
    </location>
</feature>
<feature type="domain" description="EF-hand 1" evidence="2">
    <location>
        <begin position="9"/>
        <end position="44"/>
    </location>
</feature>
<feature type="domain" description="EF-hand 2" evidence="2">
    <location>
        <begin position="80"/>
        <end position="115"/>
    </location>
</feature>
<feature type="domain" description="EF-hand 3" evidence="2">
    <location>
        <begin position="116"/>
        <end position="148"/>
    </location>
</feature>
<feature type="binding site" evidence="2">
    <location>
        <position position="22"/>
    </location>
    <ligand>
        <name>Ca(2+)</name>
        <dbReference type="ChEBI" id="CHEBI:29108"/>
        <label>1</label>
    </ligand>
</feature>
<feature type="binding site" evidence="2">
    <location>
        <position position="24"/>
    </location>
    <ligand>
        <name>Ca(2+)</name>
        <dbReference type="ChEBI" id="CHEBI:29108"/>
        <label>1</label>
    </ligand>
</feature>
<feature type="binding site" evidence="2">
    <location>
        <position position="26"/>
    </location>
    <ligand>
        <name>Ca(2+)</name>
        <dbReference type="ChEBI" id="CHEBI:29108"/>
        <label>1</label>
    </ligand>
</feature>
<feature type="binding site" evidence="2">
    <location>
        <position position="28"/>
    </location>
    <ligand>
        <name>Ca(2+)</name>
        <dbReference type="ChEBI" id="CHEBI:29108"/>
        <label>1</label>
    </ligand>
</feature>
<feature type="binding site" evidence="2">
    <location>
        <position position="33"/>
    </location>
    <ligand>
        <name>Ca(2+)</name>
        <dbReference type="ChEBI" id="CHEBI:29108"/>
        <label>1</label>
    </ligand>
</feature>
<feature type="binding site" evidence="2">
    <location>
        <position position="93"/>
    </location>
    <ligand>
        <name>Ca(2+)</name>
        <dbReference type="ChEBI" id="CHEBI:29108"/>
        <label>2</label>
    </ligand>
</feature>
<feature type="binding site" evidence="2">
    <location>
        <position position="95"/>
    </location>
    <ligand>
        <name>Ca(2+)</name>
        <dbReference type="ChEBI" id="CHEBI:29108"/>
        <label>2</label>
    </ligand>
</feature>
<feature type="binding site" evidence="2">
    <location>
        <position position="97"/>
    </location>
    <ligand>
        <name>Ca(2+)</name>
        <dbReference type="ChEBI" id="CHEBI:29108"/>
        <label>2</label>
    </ligand>
</feature>
<feature type="binding site" evidence="2">
    <location>
        <position position="99"/>
    </location>
    <ligand>
        <name>Ca(2+)</name>
        <dbReference type="ChEBI" id="CHEBI:29108"/>
        <label>2</label>
    </ligand>
</feature>
<feature type="binding site" evidence="2">
    <location>
        <position position="104"/>
    </location>
    <ligand>
        <name>Ca(2+)</name>
        <dbReference type="ChEBI" id="CHEBI:29108"/>
        <label>2</label>
    </ligand>
</feature>
<sequence>MGGKELSEEQVASMREAFSLFDTDGDGRIAPSELGVLMRSLGGNPTQAQLRDIAAQEKLTAPFDFPRFLDLMRAHLRPEPFDRPLRDAFRVLDKDASGTVSVADLRHVLTSIGEKLEPHEFDEWIREVDVAPDGTIRYDDFIRRIVAK</sequence>
<reference key="1">
    <citation type="journal article" date="2003" name="Plant Mol. Biol.">
        <title>Identification of rice (Oryza sativa) proteins linked to the cyclin-mediated regulation of the cell cycle.</title>
        <authorList>
            <person name="Cooper B."/>
            <person name="Hutchison D."/>
            <person name="Park S."/>
            <person name="Guimil S."/>
            <person name="Luginbuehl P."/>
            <person name="Ellero C."/>
            <person name="Goff S.A."/>
            <person name="Glazebrook J."/>
        </authorList>
    </citation>
    <scope>NUCLEOTIDE SEQUENCE [MRNA]</scope>
    <source>
        <strain>cv. Nipponbare</strain>
    </source>
</reference>
<reference key="2">
    <citation type="journal article" date="2005" name="Nature">
        <title>The map-based sequence of the rice genome.</title>
        <authorList>
            <consortium name="International rice genome sequencing project (IRGSP)"/>
        </authorList>
    </citation>
    <scope>NUCLEOTIDE SEQUENCE [LARGE SCALE GENOMIC DNA]</scope>
    <source>
        <strain>cv. Nipponbare</strain>
    </source>
</reference>
<reference key="3">
    <citation type="journal article" date="2008" name="Nucleic Acids Res.">
        <title>The rice annotation project database (RAP-DB): 2008 update.</title>
        <authorList>
            <consortium name="The rice annotation project (RAP)"/>
        </authorList>
    </citation>
    <scope>GENOME REANNOTATION</scope>
    <source>
        <strain>cv. Nipponbare</strain>
    </source>
</reference>
<reference key="4">
    <citation type="journal article" date="2013" name="Rice">
        <title>Improvement of the Oryza sativa Nipponbare reference genome using next generation sequence and optical map data.</title>
        <authorList>
            <person name="Kawahara Y."/>
            <person name="de la Bastide M."/>
            <person name="Hamilton J.P."/>
            <person name="Kanamori H."/>
            <person name="McCombie W.R."/>
            <person name="Ouyang S."/>
            <person name="Schwartz D.C."/>
            <person name="Tanaka T."/>
            <person name="Wu J."/>
            <person name="Zhou S."/>
            <person name="Childs K.L."/>
            <person name="Davidson R.M."/>
            <person name="Lin H."/>
            <person name="Quesada-Ocampo L."/>
            <person name="Vaillancourt B."/>
            <person name="Sakai H."/>
            <person name="Lee S.S."/>
            <person name="Kim J."/>
            <person name="Numa H."/>
            <person name="Itoh T."/>
            <person name="Buell C.R."/>
            <person name="Matsumoto T."/>
        </authorList>
    </citation>
    <scope>GENOME REANNOTATION</scope>
    <source>
        <strain>cv. Nipponbare</strain>
    </source>
</reference>
<reference key="5">
    <citation type="journal article" date="2005" name="PLoS Biol.">
        <title>The genomes of Oryza sativa: a history of duplications.</title>
        <authorList>
            <person name="Yu J."/>
            <person name="Wang J."/>
            <person name="Lin W."/>
            <person name="Li S."/>
            <person name="Li H."/>
            <person name="Zhou J."/>
            <person name="Ni P."/>
            <person name="Dong W."/>
            <person name="Hu S."/>
            <person name="Zeng C."/>
            <person name="Zhang J."/>
            <person name="Zhang Y."/>
            <person name="Li R."/>
            <person name="Xu Z."/>
            <person name="Li S."/>
            <person name="Li X."/>
            <person name="Zheng H."/>
            <person name="Cong L."/>
            <person name="Lin L."/>
            <person name="Yin J."/>
            <person name="Geng J."/>
            <person name="Li G."/>
            <person name="Shi J."/>
            <person name="Liu J."/>
            <person name="Lv H."/>
            <person name="Li J."/>
            <person name="Wang J."/>
            <person name="Deng Y."/>
            <person name="Ran L."/>
            <person name="Shi X."/>
            <person name="Wang X."/>
            <person name="Wu Q."/>
            <person name="Li C."/>
            <person name="Ren X."/>
            <person name="Wang J."/>
            <person name="Wang X."/>
            <person name="Li D."/>
            <person name="Liu D."/>
            <person name="Zhang X."/>
            <person name="Ji Z."/>
            <person name="Zhao W."/>
            <person name="Sun Y."/>
            <person name="Zhang Z."/>
            <person name="Bao J."/>
            <person name="Han Y."/>
            <person name="Dong L."/>
            <person name="Ji J."/>
            <person name="Chen P."/>
            <person name="Wu S."/>
            <person name="Liu J."/>
            <person name="Xiao Y."/>
            <person name="Bu D."/>
            <person name="Tan J."/>
            <person name="Yang L."/>
            <person name="Ye C."/>
            <person name="Zhang J."/>
            <person name="Xu J."/>
            <person name="Zhou Y."/>
            <person name="Yu Y."/>
            <person name="Zhang B."/>
            <person name="Zhuang S."/>
            <person name="Wei H."/>
            <person name="Liu B."/>
            <person name="Lei M."/>
            <person name="Yu H."/>
            <person name="Li Y."/>
            <person name="Xu H."/>
            <person name="Wei S."/>
            <person name="He X."/>
            <person name="Fang L."/>
            <person name="Zhang Z."/>
            <person name="Zhang Y."/>
            <person name="Huang X."/>
            <person name="Su Z."/>
            <person name="Tong W."/>
            <person name="Li J."/>
            <person name="Tong Z."/>
            <person name="Li S."/>
            <person name="Ye J."/>
            <person name="Wang L."/>
            <person name="Fang L."/>
            <person name="Lei T."/>
            <person name="Chen C.-S."/>
            <person name="Chen H.-C."/>
            <person name="Xu Z."/>
            <person name="Li H."/>
            <person name="Huang H."/>
            <person name="Zhang F."/>
            <person name="Xu H."/>
            <person name="Li N."/>
            <person name="Zhao C."/>
            <person name="Li S."/>
            <person name="Dong L."/>
            <person name="Huang Y."/>
            <person name="Li L."/>
            <person name="Xi Y."/>
            <person name="Qi Q."/>
            <person name="Li W."/>
            <person name="Zhang B."/>
            <person name="Hu W."/>
            <person name="Zhang Y."/>
            <person name="Tian X."/>
            <person name="Jiao Y."/>
            <person name="Liang X."/>
            <person name="Jin J."/>
            <person name="Gao L."/>
            <person name="Zheng W."/>
            <person name="Hao B."/>
            <person name="Liu S.-M."/>
            <person name="Wang W."/>
            <person name="Yuan L."/>
            <person name="Cao M."/>
            <person name="McDermott J."/>
            <person name="Samudrala R."/>
            <person name="Wang J."/>
            <person name="Wong G.K.-S."/>
            <person name="Yang H."/>
        </authorList>
    </citation>
    <scope>NUCLEOTIDE SEQUENCE [LARGE SCALE GENOMIC DNA]</scope>
    <source>
        <strain>cv. Nipponbare</strain>
    </source>
</reference>
<reference key="6">
    <citation type="journal article" date="2003" name="Science">
        <title>Collection, mapping, and annotation of over 28,000 cDNA clones from japonica rice.</title>
        <authorList>
            <consortium name="The rice full-length cDNA consortium"/>
        </authorList>
    </citation>
    <scope>NUCLEOTIDE SEQUENCE [LARGE SCALE MRNA]</scope>
    <source>
        <strain>cv. Nipponbare</strain>
    </source>
</reference>
<reference key="7">
    <citation type="journal article" date="2007" name="BMC Plant Biol.">
        <title>Genome-wide identification and analyses of the rice calmodulin and related potential calcium sensor proteins.</title>
        <authorList>
            <person name="Boonburapong B."/>
            <person name="Buaboocha T."/>
        </authorList>
    </citation>
    <scope>GENE FAMILY</scope>
    <scope>NOMENCLATURE</scope>
</reference>